<keyword id="KW-0489">Methyltransferase</keyword>
<keyword id="KW-1185">Reference proteome</keyword>
<keyword id="KW-0949">S-adenosyl-L-methionine</keyword>
<keyword id="KW-0808">Transferase</keyword>
<name>Y6073_MYCS2</name>
<sequence length="314" mass="32572">MAGNSQRRGAVRKPGTKKGPTVGSGGVRRRGLEGRGATPPAHMRPNHPAAKKARAAAKAQQQRAGRKADETELVLGRNPVLECLRAKVPATALYVALGTDADERVTESVQIAADRGISILEVPRTDLDRMSNHGLHQGLGLQVPPYAYAHPDDLLATARADAAPALLVALDNISDPRNLGAIVRSVAAFAGHGVVIPQRRSASVTAVAWRTSAGAAARVPVARATNLNRTLKSFADAGLQIVGLDAGGDTTLDELDATGPTVVVVGSEGKGLSRLVREHCDAIVSIPMAGPTESLNASVAAGVVLAEIARQRRS</sequence>
<dbReference type="EC" id="2.1.1.-"/>
<dbReference type="EMBL" id="CP000480">
    <property type="protein sequence ID" value="ABK75506.1"/>
    <property type="molecule type" value="Genomic_DNA"/>
</dbReference>
<dbReference type="EMBL" id="CP001663">
    <property type="protein sequence ID" value="AFP42346.1"/>
    <property type="molecule type" value="Genomic_DNA"/>
</dbReference>
<dbReference type="RefSeq" id="YP_890295.1">
    <property type="nucleotide sequence ID" value="NC_008596.1"/>
</dbReference>
<dbReference type="SMR" id="A0R557"/>
<dbReference type="STRING" id="246196.MSMEG_6073"/>
<dbReference type="PaxDb" id="246196-MSMEI_5913"/>
<dbReference type="KEGG" id="msb:LJ00_30030"/>
<dbReference type="KEGG" id="msg:MSMEI_5913"/>
<dbReference type="KEGG" id="msm:MSMEG_6073"/>
<dbReference type="PATRIC" id="fig|246196.19.peg.5911"/>
<dbReference type="eggNOG" id="COG0566">
    <property type="taxonomic scope" value="Bacteria"/>
</dbReference>
<dbReference type="OrthoDB" id="9785673at2"/>
<dbReference type="Proteomes" id="UP000000757">
    <property type="component" value="Chromosome"/>
</dbReference>
<dbReference type="Proteomes" id="UP000006158">
    <property type="component" value="Chromosome"/>
</dbReference>
<dbReference type="GO" id="GO:0005829">
    <property type="term" value="C:cytosol"/>
    <property type="evidence" value="ECO:0007669"/>
    <property type="project" value="TreeGrafter"/>
</dbReference>
<dbReference type="GO" id="GO:0003723">
    <property type="term" value="F:RNA binding"/>
    <property type="evidence" value="ECO:0007669"/>
    <property type="project" value="InterPro"/>
</dbReference>
<dbReference type="GO" id="GO:0008173">
    <property type="term" value="F:RNA methyltransferase activity"/>
    <property type="evidence" value="ECO:0007669"/>
    <property type="project" value="InterPro"/>
</dbReference>
<dbReference type="GO" id="GO:0032259">
    <property type="term" value="P:methylation"/>
    <property type="evidence" value="ECO:0007669"/>
    <property type="project" value="UniProtKB-KW"/>
</dbReference>
<dbReference type="GO" id="GO:0006396">
    <property type="term" value="P:RNA processing"/>
    <property type="evidence" value="ECO:0007669"/>
    <property type="project" value="InterPro"/>
</dbReference>
<dbReference type="CDD" id="cd18103">
    <property type="entry name" value="SpoU-like_RlmB"/>
    <property type="match status" value="1"/>
</dbReference>
<dbReference type="FunFam" id="3.30.1330.30:FF:000024">
    <property type="entry name" value="Putative tRNA/rRNA methyltransferase"/>
    <property type="match status" value="1"/>
</dbReference>
<dbReference type="FunFam" id="3.40.1280.10:FF:000015">
    <property type="entry name" value="Putative tRNA/rRNA methyltransferase"/>
    <property type="match status" value="1"/>
</dbReference>
<dbReference type="Gene3D" id="3.30.1330.30">
    <property type="match status" value="1"/>
</dbReference>
<dbReference type="Gene3D" id="3.40.1280.10">
    <property type="match status" value="1"/>
</dbReference>
<dbReference type="InterPro" id="IPR029028">
    <property type="entry name" value="Alpha/beta_knot_MTases"/>
</dbReference>
<dbReference type="InterPro" id="IPR029064">
    <property type="entry name" value="Ribosomal_eL30-like_sf"/>
</dbReference>
<dbReference type="InterPro" id="IPR004441">
    <property type="entry name" value="rRNA_MeTrfase_TrmH"/>
</dbReference>
<dbReference type="InterPro" id="IPR001537">
    <property type="entry name" value="SpoU_MeTrfase"/>
</dbReference>
<dbReference type="InterPro" id="IPR013123">
    <property type="entry name" value="SpoU_subst-bd"/>
</dbReference>
<dbReference type="InterPro" id="IPR029026">
    <property type="entry name" value="tRNA_m1G_MTases_N"/>
</dbReference>
<dbReference type="NCBIfam" id="TIGR00186">
    <property type="entry name" value="rRNA_methyl_3"/>
    <property type="match status" value="1"/>
</dbReference>
<dbReference type="PANTHER" id="PTHR46429">
    <property type="entry name" value="23S RRNA (GUANOSINE-2'-O-)-METHYLTRANSFERASE RLMB"/>
    <property type="match status" value="1"/>
</dbReference>
<dbReference type="PANTHER" id="PTHR46429:SF1">
    <property type="entry name" value="23S RRNA (GUANOSINE-2'-O-)-METHYLTRANSFERASE RLMB"/>
    <property type="match status" value="1"/>
</dbReference>
<dbReference type="Pfam" id="PF00588">
    <property type="entry name" value="SpoU_methylase"/>
    <property type="match status" value="1"/>
</dbReference>
<dbReference type="Pfam" id="PF08032">
    <property type="entry name" value="SpoU_sub_bind"/>
    <property type="match status" value="1"/>
</dbReference>
<dbReference type="SMART" id="SM00967">
    <property type="entry name" value="SpoU_sub_bind"/>
    <property type="match status" value="1"/>
</dbReference>
<dbReference type="SUPFAM" id="SSF75217">
    <property type="entry name" value="alpha/beta knot"/>
    <property type="match status" value="1"/>
</dbReference>
<dbReference type="SUPFAM" id="SSF55315">
    <property type="entry name" value="L30e-like"/>
    <property type="match status" value="1"/>
</dbReference>
<protein>
    <recommendedName>
        <fullName>Uncharacterized tRNA/rRNA methyltransferase MSMEG_6073/MSMEI_5913</fullName>
        <ecNumber>2.1.1.-</ecNumber>
    </recommendedName>
</protein>
<gene>
    <name type="ordered locus">MSMEG_6073</name>
    <name type="ordered locus">MSMEI_5913</name>
</gene>
<accession>A0R557</accession>
<accession>I7GFD3</accession>
<organism>
    <name type="scientific">Mycolicibacterium smegmatis (strain ATCC 700084 / mc(2)155)</name>
    <name type="common">Mycobacterium smegmatis</name>
    <dbReference type="NCBI Taxonomy" id="246196"/>
    <lineage>
        <taxon>Bacteria</taxon>
        <taxon>Bacillati</taxon>
        <taxon>Actinomycetota</taxon>
        <taxon>Actinomycetes</taxon>
        <taxon>Mycobacteriales</taxon>
        <taxon>Mycobacteriaceae</taxon>
        <taxon>Mycolicibacterium</taxon>
    </lineage>
</organism>
<feature type="chain" id="PRO_0000379577" description="Uncharacterized tRNA/rRNA methyltransferase MSMEG_6073/MSMEI_5913">
    <location>
        <begin position="1"/>
        <end position="314"/>
    </location>
</feature>
<feature type="region of interest" description="Disordered" evidence="2">
    <location>
        <begin position="1"/>
        <end position="71"/>
    </location>
</feature>
<feature type="binding site" evidence="1">
    <location>
        <position position="266"/>
    </location>
    <ligand>
        <name>S-adenosyl-L-methionine</name>
        <dbReference type="ChEBI" id="CHEBI:59789"/>
    </ligand>
</feature>
<feature type="binding site" evidence="1">
    <location>
        <position position="286"/>
    </location>
    <ligand>
        <name>S-adenosyl-L-methionine</name>
        <dbReference type="ChEBI" id="CHEBI:59789"/>
    </ligand>
</feature>
<feature type="binding site" evidence="1">
    <location>
        <position position="295"/>
    </location>
    <ligand>
        <name>S-adenosyl-L-methionine</name>
        <dbReference type="ChEBI" id="CHEBI:59789"/>
    </ligand>
</feature>
<evidence type="ECO:0000250" key="1"/>
<evidence type="ECO:0000256" key="2">
    <source>
        <dbReference type="SAM" id="MobiDB-lite"/>
    </source>
</evidence>
<evidence type="ECO:0000305" key="3"/>
<reference key="1">
    <citation type="submission" date="2006-10" db="EMBL/GenBank/DDBJ databases">
        <authorList>
            <person name="Fleischmann R.D."/>
            <person name="Dodson R.J."/>
            <person name="Haft D.H."/>
            <person name="Merkel J.S."/>
            <person name="Nelson W.C."/>
            <person name="Fraser C.M."/>
        </authorList>
    </citation>
    <scope>NUCLEOTIDE SEQUENCE [LARGE SCALE GENOMIC DNA]</scope>
    <source>
        <strain>ATCC 700084 / mc(2)155</strain>
    </source>
</reference>
<reference key="2">
    <citation type="journal article" date="2007" name="Genome Biol.">
        <title>Interrupted coding sequences in Mycobacterium smegmatis: authentic mutations or sequencing errors?</title>
        <authorList>
            <person name="Deshayes C."/>
            <person name="Perrodou E."/>
            <person name="Gallien S."/>
            <person name="Euphrasie D."/>
            <person name="Schaeffer C."/>
            <person name="Van-Dorsselaer A."/>
            <person name="Poch O."/>
            <person name="Lecompte O."/>
            <person name="Reyrat J.-M."/>
        </authorList>
    </citation>
    <scope>NUCLEOTIDE SEQUENCE [LARGE SCALE GENOMIC DNA]</scope>
    <source>
        <strain>ATCC 700084 / mc(2)155</strain>
    </source>
</reference>
<reference key="3">
    <citation type="journal article" date="2009" name="Genome Res.">
        <title>Ortho-proteogenomics: multiple proteomes investigation through orthology and a new MS-based protocol.</title>
        <authorList>
            <person name="Gallien S."/>
            <person name="Perrodou E."/>
            <person name="Carapito C."/>
            <person name="Deshayes C."/>
            <person name="Reyrat J.-M."/>
            <person name="Van Dorsselaer A."/>
            <person name="Poch O."/>
            <person name="Schaeffer C."/>
            <person name="Lecompte O."/>
        </authorList>
    </citation>
    <scope>NUCLEOTIDE SEQUENCE [LARGE SCALE GENOMIC DNA]</scope>
    <source>
        <strain>ATCC 700084 / mc(2)155</strain>
    </source>
</reference>
<proteinExistence type="inferred from homology"/>
<comment type="similarity">
    <text evidence="3">Belongs to the class IV-like SAM-binding methyltransferase superfamily. RNA methyltransferase TrmH family.</text>
</comment>